<evidence type="ECO:0000255" key="1"/>
<evidence type="ECO:0000255" key="2">
    <source>
        <dbReference type="PROSITE-ProRule" id="PRU00251"/>
    </source>
</evidence>
<evidence type="ECO:0000256" key="3">
    <source>
        <dbReference type="SAM" id="MobiDB-lite"/>
    </source>
</evidence>
<evidence type="ECO:0000269" key="4">
    <source>
    </source>
</evidence>
<evidence type="ECO:0000269" key="5">
    <source>
    </source>
</evidence>
<evidence type="ECO:0000269" key="6">
    <source>
    </source>
</evidence>
<evidence type="ECO:0000269" key="7">
    <source>
    </source>
</evidence>
<evidence type="ECO:0000269" key="8">
    <source>
    </source>
</evidence>
<evidence type="ECO:0000269" key="9">
    <source>
    </source>
</evidence>
<evidence type="ECO:0000303" key="10">
    <source>
    </source>
</evidence>
<evidence type="ECO:0000303" key="11">
    <source>
    </source>
</evidence>
<evidence type="ECO:0000303" key="12">
    <source>
    </source>
</evidence>
<evidence type="ECO:0000303" key="13">
    <source>
    </source>
</evidence>
<evidence type="ECO:0000305" key="14"/>
<name>MEF2_DROME</name>
<organism>
    <name type="scientific">Drosophila melanogaster</name>
    <name type="common">Fruit fly</name>
    <dbReference type="NCBI Taxonomy" id="7227"/>
    <lineage>
        <taxon>Eukaryota</taxon>
        <taxon>Metazoa</taxon>
        <taxon>Ecdysozoa</taxon>
        <taxon>Arthropoda</taxon>
        <taxon>Hexapoda</taxon>
        <taxon>Insecta</taxon>
        <taxon>Pterygota</taxon>
        <taxon>Neoptera</taxon>
        <taxon>Endopterygota</taxon>
        <taxon>Diptera</taxon>
        <taxon>Brachycera</taxon>
        <taxon>Muscomorpha</taxon>
        <taxon>Ephydroidea</taxon>
        <taxon>Drosophilidae</taxon>
        <taxon>Drosophila</taxon>
        <taxon>Sophophora</taxon>
    </lineage>
</organism>
<reference key="1">
    <citation type="journal article" date="1994" name="Proc. Natl. Acad. Sci. U.S.A.">
        <title>D-MEF2: a MADS box transcription factor expressed in differentiating mesoderm and muscle cell lineages during Drosophila embryogenesis.</title>
        <authorList>
            <person name="Lilly B."/>
            <person name="Galewsky S."/>
            <person name="Firulli A.B."/>
            <person name="Schulz R.A."/>
            <person name="Olson E.N."/>
        </authorList>
    </citation>
    <scope>NUCLEOTIDE SEQUENCE [MRNA] (ISOFORMS C AND D)</scope>
    <scope>FUNCTION</scope>
    <scope>TISSUE SPECIFICITY</scope>
    <scope>DEVELOPMENTAL STAGE</scope>
    <source>
        <tissue>Embryo</tissue>
    </source>
</reference>
<reference key="2">
    <citation type="journal article" date="1994" name="Proc. Natl. Acad. Sci. U.S.A.">
        <title>D-mef2: a Drosophila mesoderm-specific MADS box-containing gene with a biphasic expression profile during embryogenesis.</title>
        <authorList>
            <person name="Nguyen H.T."/>
            <person name="Bodmer R."/>
            <person name="Abmayr S.M."/>
            <person name="McDermott J.C."/>
            <person name="Spoerel N.A."/>
        </authorList>
    </citation>
    <scope>NUCLEOTIDE SEQUENCE [MRNA] (ISOFORM C)</scope>
    <scope>FUNCTION</scope>
    <scope>TISSUE SPECIFICITY</scope>
    <scope>DEVELOPMENTAL STAGE</scope>
    <source>
        <tissue>Embryo</tissue>
    </source>
</reference>
<reference key="3">
    <citation type="journal article" date="1995" name="Mech. Dev.">
        <title>Drosophila MEF2 is regulated by twist and is expressed in both the primordia and differentiated cells of the embryonic somatic, visceral and heart musculature.</title>
        <authorList>
            <person name="Taylor M.V."/>
            <person name="Beatty K.E."/>
            <person name="Hunter H.K."/>
            <person name="Baylies M.K."/>
        </authorList>
    </citation>
    <scope>NUCLEOTIDE SEQUENCE [MRNA] (ISOFORMS A; C AND D)</scope>
    <scope>TISSUE SPECIFICITY</scope>
    <source>
        <tissue>Embryo</tissue>
    </source>
</reference>
<reference key="4">
    <citation type="journal article" date="1995" name="Science">
        <title>Requirement of MADS domain transcription factor D-MEF2 for muscle formation in Drosophila.</title>
        <authorList>
            <person name="Lilly B."/>
            <person name="Zhao B."/>
            <person name="Ranganayakulu G."/>
            <person name="Paterson B.M."/>
            <person name="Schulz R.A."/>
            <person name="Olson E.N."/>
        </authorList>
    </citation>
    <scope>NUCLEOTIDE SEQUENCE [GENOMIC DNA]</scope>
    <scope>FUNCTION</scope>
</reference>
<reference key="5">
    <citation type="journal article" date="2000" name="Science">
        <title>The genome sequence of Drosophila melanogaster.</title>
        <authorList>
            <person name="Adams M.D."/>
            <person name="Celniker S.E."/>
            <person name="Holt R.A."/>
            <person name="Evans C.A."/>
            <person name="Gocayne J.D."/>
            <person name="Amanatides P.G."/>
            <person name="Scherer S.E."/>
            <person name="Li P.W."/>
            <person name="Hoskins R.A."/>
            <person name="Galle R.F."/>
            <person name="George R.A."/>
            <person name="Lewis S.E."/>
            <person name="Richards S."/>
            <person name="Ashburner M."/>
            <person name="Henderson S.N."/>
            <person name="Sutton G.G."/>
            <person name="Wortman J.R."/>
            <person name="Yandell M.D."/>
            <person name="Zhang Q."/>
            <person name="Chen L.X."/>
            <person name="Brandon R.C."/>
            <person name="Rogers Y.-H.C."/>
            <person name="Blazej R.G."/>
            <person name="Champe M."/>
            <person name="Pfeiffer B.D."/>
            <person name="Wan K.H."/>
            <person name="Doyle C."/>
            <person name="Baxter E.G."/>
            <person name="Helt G."/>
            <person name="Nelson C.R."/>
            <person name="Miklos G.L.G."/>
            <person name="Abril J.F."/>
            <person name="Agbayani A."/>
            <person name="An H.-J."/>
            <person name="Andrews-Pfannkoch C."/>
            <person name="Baldwin D."/>
            <person name="Ballew R.M."/>
            <person name="Basu A."/>
            <person name="Baxendale J."/>
            <person name="Bayraktaroglu L."/>
            <person name="Beasley E.M."/>
            <person name="Beeson K.Y."/>
            <person name="Benos P.V."/>
            <person name="Berman B.P."/>
            <person name="Bhandari D."/>
            <person name="Bolshakov S."/>
            <person name="Borkova D."/>
            <person name="Botchan M.R."/>
            <person name="Bouck J."/>
            <person name="Brokstein P."/>
            <person name="Brottier P."/>
            <person name="Burtis K.C."/>
            <person name="Busam D.A."/>
            <person name="Butler H."/>
            <person name="Cadieu E."/>
            <person name="Center A."/>
            <person name="Chandra I."/>
            <person name="Cherry J.M."/>
            <person name="Cawley S."/>
            <person name="Dahlke C."/>
            <person name="Davenport L.B."/>
            <person name="Davies P."/>
            <person name="de Pablos B."/>
            <person name="Delcher A."/>
            <person name="Deng Z."/>
            <person name="Mays A.D."/>
            <person name="Dew I."/>
            <person name="Dietz S.M."/>
            <person name="Dodson K."/>
            <person name="Doup L.E."/>
            <person name="Downes M."/>
            <person name="Dugan-Rocha S."/>
            <person name="Dunkov B.C."/>
            <person name="Dunn P."/>
            <person name="Durbin K.J."/>
            <person name="Evangelista C.C."/>
            <person name="Ferraz C."/>
            <person name="Ferriera S."/>
            <person name="Fleischmann W."/>
            <person name="Fosler C."/>
            <person name="Gabrielian A.E."/>
            <person name="Garg N.S."/>
            <person name="Gelbart W.M."/>
            <person name="Glasser K."/>
            <person name="Glodek A."/>
            <person name="Gong F."/>
            <person name="Gorrell J.H."/>
            <person name="Gu Z."/>
            <person name="Guan P."/>
            <person name="Harris M."/>
            <person name="Harris N.L."/>
            <person name="Harvey D.A."/>
            <person name="Heiman T.J."/>
            <person name="Hernandez J.R."/>
            <person name="Houck J."/>
            <person name="Hostin D."/>
            <person name="Houston K.A."/>
            <person name="Howland T.J."/>
            <person name="Wei M.-H."/>
            <person name="Ibegwam C."/>
            <person name="Jalali M."/>
            <person name="Kalush F."/>
            <person name="Karpen G.H."/>
            <person name="Ke Z."/>
            <person name="Kennison J.A."/>
            <person name="Ketchum K.A."/>
            <person name="Kimmel B.E."/>
            <person name="Kodira C.D."/>
            <person name="Kraft C.L."/>
            <person name="Kravitz S."/>
            <person name="Kulp D."/>
            <person name="Lai Z."/>
            <person name="Lasko P."/>
            <person name="Lei Y."/>
            <person name="Levitsky A.A."/>
            <person name="Li J.H."/>
            <person name="Li Z."/>
            <person name="Liang Y."/>
            <person name="Lin X."/>
            <person name="Liu X."/>
            <person name="Mattei B."/>
            <person name="McIntosh T.C."/>
            <person name="McLeod M.P."/>
            <person name="McPherson D."/>
            <person name="Merkulov G."/>
            <person name="Milshina N.V."/>
            <person name="Mobarry C."/>
            <person name="Morris J."/>
            <person name="Moshrefi A."/>
            <person name="Mount S.M."/>
            <person name="Moy M."/>
            <person name="Murphy B."/>
            <person name="Murphy L."/>
            <person name="Muzny D.M."/>
            <person name="Nelson D.L."/>
            <person name="Nelson D.R."/>
            <person name="Nelson K.A."/>
            <person name="Nixon K."/>
            <person name="Nusskern D.R."/>
            <person name="Pacleb J.M."/>
            <person name="Palazzolo M."/>
            <person name="Pittman G.S."/>
            <person name="Pan S."/>
            <person name="Pollard J."/>
            <person name="Puri V."/>
            <person name="Reese M.G."/>
            <person name="Reinert K."/>
            <person name="Remington K."/>
            <person name="Saunders R.D.C."/>
            <person name="Scheeler F."/>
            <person name="Shen H."/>
            <person name="Shue B.C."/>
            <person name="Siden-Kiamos I."/>
            <person name="Simpson M."/>
            <person name="Skupski M.P."/>
            <person name="Smith T.J."/>
            <person name="Spier E."/>
            <person name="Spradling A.C."/>
            <person name="Stapleton M."/>
            <person name="Strong R."/>
            <person name="Sun E."/>
            <person name="Svirskas R."/>
            <person name="Tector C."/>
            <person name="Turner R."/>
            <person name="Venter E."/>
            <person name="Wang A.H."/>
            <person name="Wang X."/>
            <person name="Wang Z.-Y."/>
            <person name="Wassarman D.A."/>
            <person name="Weinstock G.M."/>
            <person name="Weissenbach J."/>
            <person name="Williams S.M."/>
            <person name="Woodage T."/>
            <person name="Worley K.C."/>
            <person name="Wu D."/>
            <person name="Yang S."/>
            <person name="Yao Q.A."/>
            <person name="Ye J."/>
            <person name="Yeh R.-F."/>
            <person name="Zaveri J.S."/>
            <person name="Zhan M."/>
            <person name="Zhang G."/>
            <person name="Zhao Q."/>
            <person name="Zheng L."/>
            <person name="Zheng X.H."/>
            <person name="Zhong F.N."/>
            <person name="Zhong W."/>
            <person name="Zhou X."/>
            <person name="Zhu S.C."/>
            <person name="Zhu X."/>
            <person name="Smith H.O."/>
            <person name="Gibbs R.A."/>
            <person name="Myers E.W."/>
            <person name="Rubin G.M."/>
            <person name="Venter J.C."/>
        </authorList>
    </citation>
    <scope>NUCLEOTIDE SEQUENCE [LARGE SCALE GENOMIC DNA]</scope>
    <source>
        <strain>Berkeley</strain>
    </source>
</reference>
<reference key="6">
    <citation type="journal article" date="2002" name="Genome Biol.">
        <title>Annotation of the Drosophila melanogaster euchromatic genome: a systematic review.</title>
        <authorList>
            <person name="Misra S."/>
            <person name="Crosby M.A."/>
            <person name="Mungall C.J."/>
            <person name="Matthews B.B."/>
            <person name="Campbell K.S."/>
            <person name="Hradecky P."/>
            <person name="Huang Y."/>
            <person name="Kaminker J.S."/>
            <person name="Millburn G.H."/>
            <person name="Prochnik S.E."/>
            <person name="Smith C.D."/>
            <person name="Tupy J.L."/>
            <person name="Whitfield E.J."/>
            <person name="Bayraktaroglu L."/>
            <person name="Berman B.P."/>
            <person name="Bettencourt B.R."/>
            <person name="Celniker S.E."/>
            <person name="de Grey A.D.N.J."/>
            <person name="Drysdale R.A."/>
            <person name="Harris N.L."/>
            <person name="Richter J."/>
            <person name="Russo S."/>
            <person name="Schroeder A.J."/>
            <person name="Shu S.Q."/>
            <person name="Stapleton M."/>
            <person name="Yamada C."/>
            <person name="Ashburner M."/>
            <person name="Gelbart W.M."/>
            <person name="Rubin G.M."/>
            <person name="Lewis S.E."/>
        </authorList>
    </citation>
    <scope>GENOME REANNOTATION</scope>
    <scope>ALTERNATIVE SPLICING</scope>
    <source>
        <strain>Berkeley</strain>
    </source>
</reference>
<reference key="7">
    <citation type="journal article" date="2002" name="Genome Biol.">
        <title>A Drosophila full-length cDNA resource.</title>
        <authorList>
            <person name="Stapleton M."/>
            <person name="Carlson J.W."/>
            <person name="Brokstein P."/>
            <person name="Yu C."/>
            <person name="Champe M."/>
            <person name="George R.A."/>
            <person name="Guarin H."/>
            <person name="Kronmiller B."/>
            <person name="Pacleb J.M."/>
            <person name="Park S."/>
            <person name="Wan K.H."/>
            <person name="Rubin G.M."/>
            <person name="Celniker S.E."/>
        </authorList>
    </citation>
    <scope>NUCLEOTIDE SEQUENCE [LARGE SCALE MRNA] (ISOFORMS C AND F)</scope>
    <scope>NUCLEOTIDE SEQUENCE [LARGE SCALE MRNA] OF 1-192 (ISOFORMS C/D)</scope>
    <source>
        <strain>Berkeley</strain>
        <tissue>Embryo</tissue>
        <tissue>Head</tissue>
    </source>
</reference>
<reference key="8">
    <citation type="journal article" date="2008" name="J. Proteome Res.">
        <title>Phosphoproteome analysis of Drosophila melanogaster embryos.</title>
        <authorList>
            <person name="Zhai B."/>
            <person name="Villen J."/>
            <person name="Beausoleil S.A."/>
            <person name="Mintseris J."/>
            <person name="Gygi S.P."/>
        </authorList>
    </citation>
    <scope>PHOSPHORYLATION [LARGE SCALE ANALYSIS] AT SER-95 AND SER-98</scope>
    <scope>IDENTIFICATION BY MASS SPECTROMETRY</scope>
    <source>
        <tissue>Embryo</tissue>
    </source>
</reference>
<reference key="9">
    <citation type="journal article" date="2015" name="Dev. Biol.">
        <title>Identification of singles bar as a direct transcriptional target of Drosophila Myocyte enhancer factor-2 and a regulator of adult myoblast fusion.</title>
        <authorList>
            <person name="Brunetti T.M."/>
            <person name="Fremin B.J."/>
            <person name="Cripps R.M."/>
        </authorList>
    </citation>
    <scope>FUNCTION</scope>
    <scope>DISRUPTION PHENOTYPE</scope>
</reference>
<keyword id="KW-0010">Activator</keyword>
<keyword id="KW-0025">Alternative splicing</keyword>
<keyword id="KW-0217">Developmental protein</keyword>
<keyword id="KW-0221">Differentiation</keyword>
<keyword id="KW-0238">DNA-binding</keyword>
<keyword id="KW-0517">Myogenesis</keyword>
<keyword id="KW-0539">Nucleus</keyword>
<keyword id="KW-0597">Phosphoprotein</keyword>
<keyword id="KW-1185">Reference proteome</keyword>
<keyword id="KW-0804">Transcription</keyword>
<keyword id="KW-0805">Transcription regulation</keyword>
<feature type="chain" id="PRO_0000199427" description="Myocyte-specific enhancer factor 2">
    <location>
        <begin position="1"/>
        <end position="540"/>
    </location>
</feature>
<feature type="domain" description="MADS-box" evidence="2">
    <location>
        <begin position="3"/>
        <end position="57"/>
    </location>
</feature>
<feature type="DNA-binding region" description="Mef2-type" evidence="1">
    <location>
        <begin position="58"/>
        <end position="86"/>
    </location>
</feature>
<feature type="region of interest" description="Disordered" evidence="3">
    <location>
        <begin position="162"/>
        <end position="191"/>
    </location>
</feature>
<feature type="region of interest" description="Disordered" evidence="3">
    <location>
        <begin position="203"/>
        <end position="241"/>
    </location>
</feature>
<feature type="region of interest" description="Disordered" evidence="3">
    <location>
        <begin position="332"/>
        <end position="396"/>
    </location>
</feature>
<feature type="region of interest" description="Disordered" evidence="3">
    <location>
        <begin position="415"/>
        <end position="434"/>
    </location>
</feature>
<feature type="region of interest" description="Disordered" evidence="3">
    <location>
        <begin position="507"/>
        <end position="540"/>
    </location>
</feature>
<feature type="compositionally biased region" description="Polar residues" evidence="3">
    <location>
        <begin position="164"/>
        <end position="187"/>
    </location>
</feature>
<feature type="compositionally biased region" description="Low complexity" evidence="3">
    <location>
        <begin position="207"/>
        <end position="217"/>
    </location>
</feature>
<feature type="compositionally biased region" description="Polar residues" evidence="3">
    <location>
        <begin position="231"/>
        <end position="241"/>
    </location>
</feature>
<feature type="compositionally biased region" description="Low complexity" evidence="3">
    <location>
        <begin position="370"/>
        <end position="389"/>
    </location>
</feature>
<feature type="compositionally biased region" description="Gly residues" evidence="3">
    <location>
        <begin position="416"/>
        <end position="430"/>
    </location>
</feature>
<feature type="compositionally biased region" description="Low complexity" evidence="3">
    <location>
        <begin position="509"/>
        <end position="520"/>
    </location>
</feature>
<feature type="modified residue" description="Phosphoserine" evidence="4">
    <location>
        <position position="95"/>
    </location>
</feature>
<feature type="modified residue" description="Phosphoserine" evidence="4">
    <location>
        <position position="98"/>
    </location>
</feature>
<feature type="splice variant" id="VSP_041851" description="In isoform F." evidence="10">
    <location>
        <begin position="187"/>
        <end position="225"/>
    </location>
</feature>
<feature type="splice variant" id="VSP_006237" description="In isoform A and isoform B." evidence="11">
    <original>GGMSLII</original>
    <variation>V</variation>
    <location>
        <begin position="187"/>
        <end position="193"/>
    </location>
</feature>
<feature type="splice variant" id="VSP_006238" description="In isoform A." evidence="11">
    <original>GHDKYEGYPYRALMGHNPRWNLNF</original>
    <variation>DFIILN</variation>
    <location>
        <begin position="468"/>
        <end position="491"/>
    </location>
</feature>
<feature type="splice variant" id="VSP_006239" description="In isoform B and isoform C." evidence="10 11 12 13">
    <location>
        <begin position="469"/>
        <end position="493"/>
    </location>
</feature>
<feature type="sequence conflict" description="In Ref. 7; AAL28644/AAM48340." evidence="14" ref="7">
    <original>MGR</original>
    <variation>WAA</variation>
    <location>
        <begin position="1"/>
        <end position="3"/>
    </location>
</feature>
<feature type="sequence conflict" description="In Ref. 4; AAF06817." evidence="14" ref="4">
    <original>D</original>
    <variation>E</variation>
    <location>
        <position position="97"/>
    </location>
</feature>
<feature type="sequence conflict" description="In Ref. 4; AAF06817." evidence="14" ref="4">
    <original>A</original>
    <variation>G</variation>
    <location>
        <position position="101"/>
    </location>
</feature>
<feature type="sequence conflict" description="In Ref. 4; AAF06817." evidence="14" ref="4">
    <original>EAK</original>
    <variation>GGM</variation>
    <location>
        <begin position="112"/>
        <end position="114"/>
    </location>
</feature>
<feature type="sequence conflict" description="In Ref. 2; AAA20463." evidence="14" ref="2">
    <original>S</original>
    <variation>R</variation>
    <location>
        <position position="338"/>
    </location>
</feature>
<feature type="sequence conflict" description="In Ref. 1; AAA19957 and 4; AAF06817." evidence="14" ref="1 4">
    <original>ASGHQQNSNGSTGS</original>
    <variation>PAVISRIAMVPRAG</variation>
    <location>
        <begin position="364"/>
        <end position="377"/>
    </location>
</feature>
<feature type="sequence conflict" description="In Ref. 4; AAF06817." evidence="14" ref="4">
    <original>S</original>
    <variation>T</variation>
    <location>
        <position position="429"/>
    </location>
</feature>
<protein>
    <recommendedName>
        <fullName>Myocyte-specific enhancer factor 2</fullName>
        <shortName>D-mef2</shortName>
    </recommendedName>
    <alternativeName>
        <fullName>MADS domain transcription factor</fullName>
    </alternativeName>
</protein>
<accession>P40791</accession>
<accession>A1Z821</accession>
<accession>Q24394</accession>
<accession>Q8MT88</accession>
<accession>Q95R70</accession>
<accession>Q95RW1</accession>
<accession>Q9U5I8</accession>
<dbReference type="EMBL" id="U03292">
    <property type="protein sequence ID" value="AAA19957.1"/>
    <property type="molecule type" value="mRNA"/>
</dbReference>
<dbReference type="EMBL" id="U07422">
    <property type="protein sequence ID" value="AAA20463.1"/>
    <property type="molecule type" value="mRNA"/>
</dbReference>
<dbReference type="EMBL" id="X83527">
    <property type="protein sequence ID" value="CAA58508.1"/>
    <property type="molecule type" value="mRNA"/>
</dbReference>
<dbReference type="EMBL" id="U19493">
    <property type="protein sequence ID" value="AAF06817.1"/>
    <property type="molecule type" value="Genomic_DNA"/>
</dbReference>
<dbReference type="EMBL" id="AE013599">
    <property type="protein sequence ID" value="AAF58872.1"/>
    <property type="molecule type" value="Genomic_DNA"/>
</dbReference>
<dbReference type="EMBL" id="AE013599">
    <property type="protein sequence ID" value="AAM71042.1"/>
    <property type="molecule type" value="Genomic_DNA"/>
</dbReference>
<dbReference type="EMBL" id="AE013599">
    <property type="protein sequence ID" value="AAM71043.1"/>
    <property type="molecule type" value="Genomic_DNA"/>
</dbReference>
<dbReference type="EMBL" id="AE013599">
    <property type="protein sequence ID" value="AAM71044.1"/>
    <property type="molecule type" value="Genomic_DNA"/>
</dbReference>
<dbReference type="EMBL" id="AE013599">
    <property type="protein sequence ID" value="AAS64881.1"/>
    <property type="molecule type" value="Genomic_DNA"/>
</dbReference>
<dbReference type="EMBL" id="AY061096">
    <property type="protein sequence ID" value="AAL28644.1"/>
    <property type="status" value="ALT_INIT"/>
    <property type="molecule type" value="mRNA"/>
</dbReference>
<dbReference type="EMBL" id="AY061589">
    <property type="protein sequence ID" value="AAL29137.1"/>
    <property type="molecule type" value="mRNA"/>
</dbReference>
<dbReference type="EMBL" id="AY118311">
    <property type="protein sequence ID" value="AAM48340.1"/>
    <property type="status" value="ALT_INIT"/>
    <property type="molecule type" value="mRNA"/>
</dbReference>
<dbReference type="RefSeq" id="NP_477018.1">
    <molecule id="P40791-4"/>
    <property type="nucleotide sequence ID" value="NM_057670.5"/>
</dbReference>
<dbReference type="RefSeq" id="NP_477019.1">
    <molecule id="P40791-3"/>
    <property type="nucleotide sequence ID" value="NM_057671.5"/>
</dbReference>
<dbReference type="RefSeq" id="NP_477020.1">
    <molecule id="P40791-1"/>
    <property type="nucleotide sequence ID" value="NM_057672.5"/>
</dbReference>
<dbReference type="RefSeq" id="NP_477021.1">
    <molecule id="P40791-2"/>
    <property type="nucleotide sequence ID" value="NM_057673.5"/>
</dbReference>
<dbReference type="RefSeq" id="NP_995789.1">
    <molecule id="P40791-6"/>
    <property type="nucleotide sequence ID" value="NM_206067.4"/>
</dbReference>
<dbReference type="SMR" id="P40791"/>
<dbReference type="BioGRID" id="61860">
    <property type="interactions" value="30"/>
</dbReference>
<dbReference type="FunCoup" id="P40791">
    <property type="interactions" value="928"/>
</dbReference>
<dbReference type="IntAct" id="P40791">
    <property type="interactions" value="8"/>
</dbReference>
<dbReference type="STRING" id="7227.FBpp0303551"/>
<dbReference type="GlyGen" id="P40791">
    <property type="glycosylation" value="1 site"/>
</dbReference>
<dbReference type="iPTMnet" id="P40791"/>
<dbReference type="PaxDb" id="7227-FBpp0087529"/>
<dbReference type="EnsemblMetazoa" id="FBtr0088443">
    <molecule id="P40791-1"/>
    <property type="protein sequence ID" value="FBpp0087529"/>
    <property type="gene ID" value="FBgn0011656"/>
</dbReference>
<dbReference type="EnsemblMetazoa" id="FBtr0088444">
    <molecule id="P40791-2"/>
    <property type="protein sequence ID" value="FBpp0087530"/>
    <property type="gene ID" value="FBgn0011656"/>
</dbReference>
<dbReference type="EnsemblMetazoa" id="FBtr0088445">
    <molecule id="P40791-4"/>
    <property type="protein sequence ID" value="FBpp0087531"/>
    <property type="gene ID" value="FBgn0011656"/>
</dbReference>
<dbReference type="EnsemblMetazoa" id="FBtr0088446">
    <molecule id="P40791-3"/>
    <property type="protein sequence ID" value="FBpp0087532"/>
    <property type="gene ID" value="FBgn0011656"/>
</dbReference>
<dbReference type="EnsemblMetazoa" id="FBtr0088447">
    <molecule id="P40791-6"/>
    <property type="protein sequence ID" value="FBpp0089303"/>
    <property type="gene ID" value="FBgn0011656"/>
</dbReference>
<dbReference type="GeneID" id="36032"/>
<dbReference type="KEGG" id="dme:Dmel_CG1429"/>
<dbReference type="UCSC" id="CG1429-RF">
    <property type="organism name" value="d. melanogaster"/>
</dbReference>
<dbReference type="AGR" id="FB:FBgn0011656"/>
<dbReference type="CTD" id="36032"/>
<dbReference type="FlyBase" id="FBgn0011656">
    <property type="gene designation" value="Mef2"/>
</dbReference>
<dbReference type="VEuPathDB" id="VectorBase:FBgn0011656"/>
<dbReference type="eggNOG" id="KOG0014">
    <property type="taxonomic scope" value="Eukaryota"/>
</dbReference>
<dbReference type="GeneTree" id="ENSGT00940000169350"/>
<dbReference type="InParanoid" id="P40791"/>
<dbReference type="OMA" id="MATNSYS"/>
<dbReference type="OrthoDB" id="1898716at2759"/>
<dbReference type="PhylomeDB" id="P40791"/>
<dbReference type="Reactome" id="R-DME-525793">
    <property type="pathway name" value="Myogenesis"/>
</dbReference>
<dbReference type="SignaLink" id="P40791"/>
<dbReference type="BioGRID-ORCS" id="36032">
    <property type="hits" value="0 hits in 3 CRISPR screens"/>
</dbReference>
<dbReference type="GenomeRNAi" id="36032"/>
<dbReference type="PRO" id="PR:P40791"/>
<dbReference type="Proteomes" id="UP000000803">
    <property type="component" value="Chromosome 2R"/>
</dbReference>
<dbReference type="Bgee" id="FBgn0011656">
    <property type="expression patterns" value="Expressed in transmedullary neuron Tm1 (Drosophila) in insect head and 292 other cell types or tissues"/>
</dbReference>
<dbReference type="ExpressionAtlas" id="P40791">
    <property type="expression patterns" value="baseline and differential"/>
</dbReference>
<dbReference type="GO" id="GO:0005634">
    <property type="term" value="C:nucleus"/>
    <property type="evidence" value="ECO:0000314"/>
    <property type="project" value="FlyBase"/>
</dbReference>
<dbReference type="GO" id="GO:0000987">
    <property type="term" value="F:cis-regulatory region sequence-specific DNA binding"/>
    <property type="evidence" value="ECO:0000314"/>
    <property type="project" value="FlyBase"/>
</dbReference>
<dbReference type="GO" id="GO:0003677">
    <property type="term" value="F:DNA binding"/>
    <property type="evidence" value="ECO:0000314"/>
    <property type="project" value="FlyBase"/>
</dbReference>
<dbReference type="GO" id="GO:0001228">
    <property type="term" value="F:DNA-binding transcription activator activity, RNA polymerase II-specific"/>
    <property type="evidence" value="ECO:0000314"/>
    <property type="project" value="FlyBase"/>
</dbReference>
<dbReference type="GO" id="GO:0000981">
    <property type="term" value="F:DNA-binding transcription factor activity, RNA polymerase II-specific"/>
    <property type="evidence" value="ECO:0000318"/>
    <property type="project" value="GO_Central"/>
</dbReference>
<dbReference type="GO" id="GO:0042826">
    <property type="term" value="F:histone deacetylase binding"/>
    <property type="evidence" value="ECO:0000318"/>
    <property type="project" value="GO_Central"/>
</dbReference>
<dbReference type="GO" id="GO:0046983">
    <property type="term" value="F:protein dimerization activity"/>
    <property type="evidence" value="ECO:0007669"/>
    <property type="project" value="InterPro"/>
</dbReference>
<dbReference type="GO" id="GO:0000978">
    <property type="term" value="F:RNA polymerase II cis-regulatory region sequence-specific DNA binding"/>
    <property type="evidence" value="ECO:0000318"/>
    <property type="project" value="GO_Central"/>
</dbReference>
<dbReference type="GO" id="GO:0007496">
    <property type="term" value="P:anterior midgut development"/>
    <property type="evidence" value="ECO:0000315"/>
    <property type="project" value="FlyBase"/>
</dbReference>
<dbReference type="GO" id="GO:0019730">
    <property type="term" value="P:antimicrobial humoral response"/>
    <property type="evidence" value="ECO:0000315"/>
    <property type="project" value="FlyBase"/>
</dbReference>
<dbReference type="GO" id="GO:0052576">
    <property type="term" value="P:carbohydrate storage"/>
    <property type="evidence" value="ECO:0000315"/>
    <property type="project" value="FlyBase"/>
</dbReference>
<dbReference type="GO" id="GO:0030154">
    <property type="term" value="P:cell differentiation"/>
    <property type="evidence" value="ECO:0000318"/>
    <property type="project" value="GO_Central"/>
</dbReference>
<dbReference type="GO" id="GO:0007507">
    <property type="term" value="P:heart development"/>
    <property type="evidence" value="ECO:0000304"/>
    <property type="project" value="FlyBase"/>
</dbReference>
<dbReference type="GO" id="GO:0007526">
    <property type="term" value="P:larval somatic muscle development"/>
    <property type="evidence" value="ECO:0000315"/>
    <property type="project" value="FlyBase"/>
</dbReference>
<dbReference type="GO" id="GO:0019915">
    <property type="term" value="P:lipid storage"/>
    <property type="evidence" value="ECO:0000315"/>
    <property type="project" value="FlyBase"/>
</dbReference>
<dbReference type="GO" id="GO:0045475">
    <property type="term" value="P:locomotor rhythm"/>
    <property type="evidence" value="ECO:0000315"/>
    <property type="project" value="FlyBase"/>
</dbReference>
<dbReference type="GO" id="GO:0007498">
    <property type="term" value="P:mesoderm development"/>
    <property type="evidence" value="ECO:0000315"/>
    <property type="project" value="FlyBase"/>
</dbReference>
<dbReference type="GO" id="GO:0055001">
    <property type="term" value="P:muscle cell development"/>
    <property type="evidence" value="ECO:0000315"/>
    <property type="project" value="FlyBase"/>
</dbReference>
<dbReference type="GO" id="GO:0007517">
    <property type="term" value="P:muscle organ development"/>
    <property type="evidence" value="ECO:0000315"/>
    <property type="project" value="FlyBase"/>
</dbReference>
<dbReference type="GO" id="GO:0007520">
    <property type="term" value="P:myoblast fusion"/>
    <property type="evidence" value="ECO:0000315"/>
    <property type="project" value="FlyBase"/>
</dbReference>
<dbReference type="GO" id="GO:0010628">
    <property type="term" value="P:positive regulation of gene expression"/>
    <property type="evidence" value="ECO:0000314"/>
    <property type="project" value="FlyBase"/>
</dbReference>
<dbReference type="GO" id="GO:0045944">
    <property type="term" value="P:positive regulation of transcription by RNA polymerase II"/>
    <property type="evidence" value="ECO:0000315"/>
    <property type="project" value="FlyBase"/>
</dbReference>
<dbReference type="GO" id="GO:0032968">
    <property type="term" value="P:positive regulation of transcription elongation by RNA polymerase II"/>
    <property type="evidence" value="ECO:0000314"/>
    <property type="project" value="FlyBase"/>
</dbReference>
<dbReference type="GO" id="GO:0010468">
    <property type="term" value="P:regulation of gene expression"/>
    <property type="evidence" value="ECO:0000315"/>
    <property type="project" value="FlyBase"/>
</dbReference>
<dbReference type="CDD" id="cd00265">
    <property type="entry name" value="MADS_MEF2_like"/>
    <property type="match status" value="1"/>
</dbReference>
<dbReference type="FunFam" id="3.40.1810.10:FF:000001">
    <property type="entry name" value="Myocyte-specific enhancer factor 2A homolog"/>
    <property type="match status" value="1"/>
</dbReference>
<dbReference type="Gene3D" id="3.40.1810.10">
    <property type="entry name" value="Transcription factor, MADS-box"/>
    <property type="match status" value="1"/>
</dbReference>
<dbReference type="InterPro" id="IPR022102">
    <property type="entry name" value="HJURP_C"/>
</dbReference>
<dbReference type="InterPro" id="IPR033896">
    <property type="entry name" value="MEF2-like_N"/>
</dbReference>
<dbReference type="InterPro" id="IPR002100">
    <property type="entry name" value="TF_MADSbox"/>
</dbReference>
<dbReference type="InterPro" id="IPR036879">
    <property type="entry name" value="TF_MADSbox_sf"/>
</dbReference>
<dbReference type="PANTHER" id="PTHR11945">
    <property type="entry name" value="MADS BOX PROTEIN"/>
    <property type="match status" value="1"/>
</dbReference>
<dbReference type="PANTHER" id="PTHR11945:SF534">
    <property type="entry name" value="MYOCYTE-SPECIFIC ENHANCER FACTOR 2"/>
    <property type="match status" value="1"/>
</dbReference>
<dbReference type="Pfam" id="PF12347">
    <property type="entry name" value="HJURP_C"/>
    <property type="match status" value="1"/>
</dbReference>
<dbReference type="Pfam" id="PF00319">
    <property type="entry name" value="SRF-TF"/>
    <property type="match status" value="1"/>
</dbReference>
<dbReference type="PRINTS" id="PR00404">
    <property type="entry name" value="MADSDOMAIN"/>
</dbReference>
<dbReference type="SMART" id="SM00432">
    <property type="entry name" value="MADS"/>
    <property type="match status" value="1"/>
</dbReference>
<dbReference type="SUPFAM" id="SSF55455">
    <property type="entry name" value="SRF-like"/>
    <property type="match status" value="1"/>
</dbReference>
<dbReference type="PROSITE" id="PS00350">
    <property type="entry name" value="MADS_BOX_1"/>
    <property type="match status" value="1"/>
</dbReference>
<dbReference type="PROSITE" id="PS50066">
    <property type="entry name" value="MADS_BOX_2"/>
    <property type="match status" value="1"/>
</dbReference>
<comment type="function">
    <text evidence="5 7 8 9">Transcription factor that could be a key player in early mesoderm differentiation and may be required for subsequent cell fate specifications within the somatic and visceral/heart mesodermal layers (PubMed:7839146, PubMed:8052612, PubMed:8202544). Essential for myoblast fusion and consequently muscle formation in adults (PubMed:25797154). During embryonic and pupal development, binds to the enhancer of the myoblast fusion gene sing and activates its transcription (PubMed:25797154).</text>
</comment>
<comment type="interaction">
    <interactant intactId="EBI-235994">
        <id>P40791</id>
    </interactant>
    <interactant intactId="EBI-169179">
        <id>P20227</id>
        <label>Tbp</label>
    </interactant>
    <organismsDiffer>false</organismsDiffer>
    <experiments>2</experiments>
</comment>
<comment type="subcellular location">
    <subcellularLocation>
        <location evidence="2">Nucleus</location>
    </subcellularLocation>
</comment>
<comment type="alternative products">
    <event type="alternative splicing"/>
    <isoform>
        <id>P40791-1</id>
        <name>D</name>
        <name>1</name>
        <sequence type="displayed"/>
    </isoform>
    <isoform>
        <id>P40791-2</id>
        <name>A</name>
        <name>3</name>
        <sequence type="described" ref="VSP_006237 VSP_006238"/>
    </isoform>
    <isoform>
        <id>P40791-3</id>
        <name>B</name>
        <sequence type="described" ref="VSP_006237 VSP_006239"/>
    </isoform>
    <isoform>
        <id>P40791-4</id>
        <name>C</name>
        <name>2</name>
        <sequence type="described" ref="VSP_006239"/>
    </isoform>
    <isoform>
        <id>P40791-6</id>
        <name>F</name>
        <sequence type="described" ref="VSP_041851"/>
    </isoform>
</comment>
<comment type="tissue specificity">
    <text evidence="6 8 9">Expressed in all presumptive mesoderm prior to the splitting process that generates the somatic and visceral/ heart mesoderm. After the subdivision, it is found in both the somatic and the visceral/heart mesoderm.</text>
</comment>
<comment type="developmental stage">
    <text evidence="8 9">First detectable in the presumptive mesoderm at late cellular blastoderm stage.</text>
</comment>
<comment type="induction">
    <text>TWI activity is required for MEF2 expression. SNA activity is needed for maintaining MEF2 expression.</text>
</comment>
<comment type="disruption phenotype">
    <text evidence="5">RNAi-mediated knockdown in pupae results in smaller muscle founder templates that display a reduced number of nuclei. No effect on the initiation of myoblast fusion.</text>
</comment>
<comment type="similarity">
    <text evidence="14">Belongs to the MEF2 family.</text>
</comment>
<comment type="sequence caution" evidence="14">
    <conflict type="erroneous initiation">
        <sequence resource="EMBL-CDS" id="AAL28644"/>
    </conflict>
    <text>Truncated N-terminus.</text>
</comment>
<comment type="sequence caution" evidence="14">
    <conflict type="erroneous initiation">
        <sequence resource="EMBL-CDS" id="AAM48340"/>
    </conflict>
    <text>Truncated N-terminus.</text>
</comment>
<sequence length="540" mass="57172">MGRKKIQISRITDERNRQVTFNKRKFGVMKKAYELSVLCDCEIALIIFSSSNKLYQYASTDMDRVLLKYTEYNEPHESLTNKNIIEKENKNGVMSPDSPEAETDYTLTPRTEAKYNKIDEEFQNMMQRNQMAIGGAGAPRQLPNSSYTLPVSVPVPGSYGDNLLQASPQMSHTNISPRPSSSETDSGGMSLIIYPSGSMLEMSNGYPHSHSPLVGSPSPGPSPGIAHHLSIKQQSPGSQNGRASNLRVVIPPTIAPIPPNMSAPDDVGYADQRQSQTSLNTPVVTLQTPIPALTSYSFGAQDFSSSGVMNSADIMSLNTWHQGLVPHSSLSHLAVSNSTPPPATSPVSIKVKAEPQSPPRDLSASGHQQNSNGSTGSGGSSSSTSSNASGGAGGGGAVSAANVITHLNNVSVLAGGPSGQGGGGGGGGSNGNVEQATNLSVLSHAQQHHLGMPNSRPSSTGHITPTPGHDKYEGYPYRALMGHNPRWNLNFAGAPSSDQDVRLAAVAVQQQQQQPHQQQQLGDYDAPNHKRPRISGGWGT</sequence>
<proteinExistence type="evidence at protein level"/>
<gene>
    <name type="primary">Mef2</name>
    <name type="ORF">CG1429</name>
</gene>